<organism>
    <name type="scientific">Brucella suis biovar 1 (strain 1330)</name>
    <dbReference type="NCBI Taxonomy" id="204722"/>
    <lineage>
        <taxon>Bacteria</taxon>
        <taxon>Pseudomonadati</taxon>
        <taxon>Pseudomonadota</taxon>
        <taxon>Alphaproteobacteria</taxon>
        <taxon>Hyphomicrobiales</taxon>
        <taxon>Brucellaceae</taxon>
        <taxon>Brucella/Ochrobactrum group</taxon>
        <taxon>Brucella</taxon>
    </lineage>
</organism>
<comment type="function">
    <text evidence="1">Involved in the regulation of glutamine synthetase GlnA, a key enzyme in the process to assimilate ammonia. When cellular nitrogen levels are high, the C-terminal adenylyl transferase (AT) inactivates GlnA by covalent transfer of an adenylyl group from ATP to specific tyrosine residue of GlnA, thus reducing its activity. Conversely, when nitrogen levels are low, the N-terminal adenylyl removase (AR) activates GlnA by removing the adenylyl group by phosphorolysis, increasing its activity. The regulatory region of GlnE binds the signal transduction protein PII (GlnB) which indicates the nitrogen status of the cell.</text>
</comment>
<comment type="catalytic activity">
    <reaction evidence="1">
        <text>[glutamine synthetase]-O(4)-(5'-adenylyl)-L-tyrosine + phosphate = [glutamine synthetase]-L-tyrosine + ADP</text>
        <dbReference type="Rhea" id="RHEA:43716"/>
        <dbReference type="Rhea" id="RHEA-COMP:10660"/>
        <dbReference type="Rhea" id="RHEA-COMP:10661"/>
        <dbReference type="ChEBI" id="CHEBI:43474"/>
        <dbReference type="ChEBI" id="CHEBI:46858"/>
        <dbReference type="ChEBI" id="CHEBI:83624"/>
        <dbReference type="ChEBI" id="CHEBI:456216"/>
        <dbReference type="EC" id="2.7.7.89"/>
    </reaction>
</comment>
<comment type="catalytic activity">
    <reaction evidence="1">
        <text>[glutamine synthetase]-L-tyrosine + ATP = [glutamine synthetase]-O(4)-(5'-adenylyl)-L-tyrosine + diphosphate</text>
        <dbReference type="Rhea" id="RHEA:18589"/>
        <dbReference type="Rhea" id="RHEA-COMP:10660"/>
        <dbReference type="Rhea" id="RHEA-COMP:10661"/>
        <dbReference type="ChEBI" id="CHEBI:30616"/>
        <dbReference type="ChEBI" id="CHEBI:33019"/>
        <dbReference type="ChEBI" id="CHEBI:46858"/>
        <dbReference type="ChEBI" id="CHEBI:83624"/>
        <dbReference type="EC" id="2.7.7.42"/>
    </reaction>
</comment>
<comment type="cofactor">
    <cofactor evidence="1">
        <name>Mg(2+)</name>
        <dbReference type="ChEBI" id="CHEBI:18420"/>
    </cofactor>
</comment>
<comment type="similarity">
    <text evidence="1">Belongs to the GlnE family.</text>
</comment>
<dbReference type="EC" id="2.7.7.89" evidence="1"/>
<dbReference type="EC" id="2.7.7.42" evidence="1"/>
<dbReference type="EMBL" id="AE014291">
    <property type="protein sequence ID" value="AAN29543.1"/>
    <property type="molecule type" value="Genomic_DNA"/>
</dbReference>
<dbReference type="EMBL" id="CP002997">
    <property type="protein sequence ID" value="AEM17960.1"/>
    <property type="molecule type" value="Genomic_DNA"/>
</dbReference>
<dbReference type="RefSeq" id="WP_006189992.1">
    <property type="nucleotide sequence ID" value="NZ_KN046804.1"/>
</dbReference>
<dbReference type="SMR" id="Q8G1U0"/>
<dbReference type="GeneID" id="45051704"/>
<dbReference type="KEGG" id="bms:BR0614"/>
<dbReference type="KEGG" id="bsi:BS1330_I0610"/>
<dbReference type="PATRIC" id="fig|204722.22.peg.1295"/>
<dbReference type="HOGENOM" id="CLU_006233_0_0_5"/>
<dbReference type="PhylomeDB" id="Q8G1U0"/>
<dbReference type="Proteomes" id="UP000007104">
    <property type="component" value="Chromosome I"/>
</dbReference>
<dbReference type="GO" id="GO:0005829">
    <property type="term" value="C:cytosol"/>
    <property type="evidence" value="ECO:0007669"/>
    <property type="project" value="TreeGrafter"/>
</dbReference>
<dbReference type="GO" id="GO:0008882">
    <property type="term" value="F:[glutamate-ammonia-ligase] adenylyltransferase activity"/>
    <property type="evidence" value="ECO:0007669"/>
    <property type="project" value="UniProtKB-UniRule"/>
</dbReference>
<dbReference type="GO" id="GO:0047388">
    <property type="term" value="F:[glutamine synthetase]-adenylyl-L-tyrosine phosphorylase activity"/>
    <property type="evidence" value="ECO:0007669"/>
    <property type="project" value="UniProtKB-EC"/>
</dbReference>
<dbReference type="GO" id="GO:0005524">
    <property type="term" value="F:ATP binding"/>
    <property type="evidence" value="ECO:0007669"/>
    <property type="project" value="UniProtKB-UniRule"/>
</dbReference>
<dbReference type="GO" id="GO:0000287">
    <property type="term" value="F:magnesium ion binding"/>
    <property type="evidence" value="ECO:0007669"/>
    <property type="project" value="UniProtKB-UniRule"/>
</dbReference>
<dbReference type="GO" id="GO:0000820">
    <property type="term" value="P:regulation of glutamine family amino acid metabolic process"/>
    <property type="evidence" value="ECO:0007669"/>
    <property type="project" value="UniProtKB-UniRule"/>
</dbReference>
<dbReference type="CDD" id="cd05401">
    <property type="entry name" value="NT_GlnE_GlnD_like"/>
    <property type="match status" value="2"/>
</dbReference>
<dbReference type="Gene3D" id="1.20.120.1510">
    <property type="match status" value="1"/>
</dbReference>
<dbReference type="Gene3D" id="3.30.460.10">
    <property type="entry name" value="Beta Polymerase, domain 2"/>
    <property type="match status" value="2"/>
</dbReference>
<dbReference type="Gene3D" id="1.20.120.330">
    <property type="entry name" value="Nucleotidyltransferases domain 2"/>
    <property type="match status" value="2"/>
</dbReference>
<dbReference type="HAMAP" id="MF_00802">
    <property type="entry name" value="GlnE"/>
    <property type="match status" value="1"/>
</dbReference>
<dbReference type="InterPro" id="IPR023057">
    <property type="entry name" value="GlnE"/>
</dbReference>
<dbReference type="InterPro" id="IPR005190">
    <property type="entry name" value="GlnE_rpt_dom"/>
</dbReference>
<dbReference type="InterPro" id="IPR043519">
    <property type="entry name" value="NT_sf"/>
</dbReference>
<dbReference type="InterPro" id="IPR013546">
    <property type="entry name" value="PII_UdlTrfase/GS_AdlTrfase"/>
</dbReference>
<dbReference type="NCBIfam" id="NF008292">
    <property type="entry name" value="PRK11072.1"/>
    <property type="match status" value="1"/>
</dbReference>
<dbReference type="NCBIfam" id="NF010706">
    <property type="entry name" value="PRK14108.1"/>
    <property type="match status" value="1"/>
</dbReference>
<dbReference type="PANTHER" id="PTHR30621:SF0">
    <property type="entry name" value="BIFUNCTIONAL GLUTAMINE SYNTHETASE ADENYLYLTRANSFERASE_ADENYLYL-REMOVING ENZYME"/>
    <property type="match status" value="1"/>
</dbReference>
<dbReference type="PANTHER" id="PTHR30621">
    <property type="entry name" value="GLUTAMINE SYNTHETASE ADENYLYLTRANSFERASE"/>
    <property type="match status" value="1"/>
</dbReference>
<dbReference type="Pfam" id="PF08335">
    <property type="entry name" value="GlnD_UR_UTase"/>
    <property type="match status" value="1"/>
</dbReference>
<dbReference type="Pfam" id="PF03710">
    <property type="entry name" value="GlnE"/>
    <property type="match status" value="2"/>
</dbReference>
<dbReference type="SUPFAM" id="SSF81301">
    <property type="entry name" value="Nucleotidyltransferase"/>
    <property type="match status" value="2"/>
</dbReference>
<dbReference type="SUPFAM" id="SSF81593">
    <property type="entry name" value="Nucleotidyltransferase substrate binding subunit/domain"/>
    <property type="match status" value="2"/>
</dbReference>
<name>GLNE_BRUSU</name>
<proteinExistence type="inferred from homology"/>
<gene>
    <name evidence="1" type="primary">glnE</name>
    <name type="ordered locus">BR0614</name>
    <name type="ordered locus">BS1330_I0610</name>
</gene>
<evidence type="ECO:0000255" key="1">
    <source>
        <dbReference type="HAMAP-Rule" id="MF_00802"/>
    </source>
</evidence>
<reference key="1">
    <citation type="journal article" date="2002" name="Proc. Natl. Acad. Sci. U.S.A.">
        <title>The Brucella suis genome reveals fundamental similarities between animal and plant pathogens and symbionts.</title>
        <authorList>
            <person name="Paulsen I.T."/>
            <person name="Seshadri R."/>
            <person name="Nelson K.E."/>
            <person name="Eisen J.A."/>
            <person name="Heidelberg J.F."/>
            <person name="Read T.D."/>
            <person name="Dodson R.J."/>
            <person name="Umayam L.A."/>
            <person name="Brinkac L.M."/>
            <person name="Beanan M.J."/>
            <person name="Daugherty S.C."/>
            <person name="DeBoy R.T."/>
            <person name="Durkin A.S."/>
            <person name="Kolonay J.F."/>
            <person name="Madupu R."/>
            <person name="Nelson W.C."/>
            <person name="Ayodeji B."/>
            <person name="Kraul M."/>
            <person name="Shetty J."/>
            <person name="Malek J.A."/>
            <person name="Van Aken S.E."/>
            <person name="Riedmuller S."/>
            <person name="Tettelin H."/>
            <person name="Gill S.R."/>
            <person name="White O."/>
            <person name="Salzberg S.L."/>
            <person name="Hoover D.L."/>
            <person name="Lindler L.E."/>
            <person name="Halling S.M."/>
            <person name="Boyle S.M."/>
            <person name="Fraser C.M."/>
        </authorList>
    </citation>
    <scope>NUCLEOTIDE SEQUENCE [LARGE SCALE GENOMIC DNA]</scope>
    <source>
        <strain>1330</strain>
    </source>
</reference>
<reference key="2">
    <citation type="journal article" date="2011" name="J. Bacteriol.">
        <title>Revised genome sequence of Brucella suis 1330.</title>
        <authorList>
            <person name="Tae H."/>
            <person name="Shallom S."/>
            <person name="Settlage R."/>
            <person name="Preston D."/>
            <person name="Adams L.G."/>
            <person name="Garner H.R."/>
        </authorList>
    </citation>
    <scope>NUCLEOTIDE SEQUENCE [LARGE SCALE GENOMIC DNA]</scope>
    <source>
        <strain>1330</strain>
    </source>
</reference>
<feature type="chain" id="PRO_0000209236" description="Bifunctional glutamine synthetase adenylyltransferase/adenylyl-removing enzyme">
    <location>
        <begin position="1"/>
        <end position="983"/>
    </location>
</feature>
<feature type="region of interest" description="Adenylyl removase" evidence="1">
    <location>
        <begin position="1"/>
        <end position="468"/>
    </location>
</feature>
<feature type="region of interest" description="Adenylyl transferase" evidence="1">
    <location>
        <begin position="473"/>
        <end position="983"/>
    </location>
</feature>
<accession>Q8G1U0</accession>
<accession>G0K7N2</accession>
<sequence length="983" mass="109457">MTVENAKALFFERNLCALTPLDPERASAFLADLEARAREEELAGVVALLGRKKAADFLSAILDLSPFIREALTRQPRILDRIVSATPESALEAILDEISASGTVAGVSESELMTSLRQLKREAHVLIALCDLARIFNTETTTDRLTDLAEACTGAAVRFLLLDADAAGRINLPDRSNPEKDCGWIVLGMGKFGARELNYSSDIDLIVFIDETKPAIGDPYECVDTFSRLTRRLVRILQDRTGDGYVFRVDLRLRPDPGSTPLAIPVGAALHYYEGRGQNWERAAMIKARPVAGDRLSGKQILAELSPYVWRKYLDYAAIADVHSIKRQIHAHKGHGDIAVRGHNVKLGRGGIREIEFFVQTQQLIAGGRFPELRGNQTVPMLARLAERGWITQQARDALAQEYWFLRDVEHRIQMIVDEQTHILPEDDEGFARVSHMMGYADPAEFSEIFLAALKVVEKQYAALFAQAPELGAASGNLVFTGDVDDPGTLETLSAMGYERSSDICRVIRTWHFGRYRATQSAEARERLTELTPALLKAFAETRRADESLRRFDGFLQGLPAGIQLFSLLQSNPRLLNLLVMIMSAAPRLADIITRNPHVFDGLLDPAIFSEVPTRAYLEERLRAFLGSATDFEEVLDRLRIFAAEHRFLIGIRLLTGAINGVRAGQAFSDLAELMVGRALEAVEAELQRRHGKVKGAKVALLAMGKLGSRELTAGSDVDLILLYDHDKDAEESDGEKPLAPSQYYIRLTQRLIAALSAPTAEGVLYEVDMRLRPSGNKGPVATHIEAFGKYQRNDAWTWEHMALTRARPIHGDEAFIARIKVDIEDVLAMPRDVRKLAGDVREMRELIAQEKPPRDDWDLKLKPGGIIDLEFIAQFATLAGYVKKTPRPFATEEVLANLDPFFADPAMVDGLVEAHRFYTNLSQAIRLCLNDSAGLDQFPPGMRELLCRVAGLPDIERIEYELLEHYRLVRAAFDKLVGHGAD</sequence>
<keyword id="KW-0067">ATP-binding</keyword>
<keyword id="KW-0460">Magnesium</keyword>
<keyword id="KW-0511">Multifunctional enzyme</keyword>
<keyword id="KW-0547">Nucleotide-binding</keyword>
<keyword id="KW-0548">Nucleotidyltransferase</keyword>
<keyword id="KW-0808">Transferase</keyword>
<protein>
    <recommendedName>
        <fullName evidence="1">Bifunctional glutamine synthetase adenylyltransferase/adenylyl-removing enzyme</fullName>
    </recommendedName>
    <alternativeName>
        <fullName evidence="1">ATP:glutamine synthetase adenylyltransferase</fullName>
    </alternativeName>
    <alternativeName>
        <fullName evidence="1">ATase</fullName>
    </alternativeName>
    <domain>
        <recommendedName>
            <fullName evidence="1">Glutamine synthetase adenylyl-L-tyrosine phosphorylase</fullName>
            <ecNumber evidence="1">2.7.7.89</ecNumber>
        </recommendedName>
        <alternativeName>
            <fullName evidence="1">Adenylyl removase</fullName>
            <shortName evidence="1">AR</shortName>
            <shortName evidence="1">AT-N</shortName>
        </alternativeName>
    </domain>
    <domain>
        <recommendedName>
            <fullName evidence="1">Glutamine synthetase adenylyl transferase</fullName>
            <ecNumber evidence="1">2.7.7.42</ecNumber>
        </recommendedName>
        <alternativeName>
            <fullName evidence="1">Adenylyl transferase</fullName>
            <shortName evidence="1">AT</shortName>
            <shortName evidence="1">AT-C</shortName>
        </alternativeName>
    </domain>
</protein>